<name>CHEB4_GEOMG</name>
<dbReference type="EC" id="3.1.1.61" evidence="1"/>
<dbReference type="EC" id="3.5.1.44" evidence="1"/>
<dbReference type="EMBL" id="CP000148">
    <property type="protein sequence ID" value="ABB32929.1"/>
    <property type="molecule type" value="Genomic_DNA"/>
</dbReference>
<dbReference type="SMR" id="Q39S45"/>
<dbReference type="STRING" id="269799.Gmet_2711"/>
<dbReference type="KEGG" id="gme:Gmet_2711"/>
<dbReference type="eggNOG" id="COG2201">
    <property type="taxonomic scope" value="Bacteria"/>
</dbReference>
<dbReference type="HOGENOM" id="CLU_000445_51_0_7"/>
<dbReference type="Proteomes" id="UP000007073">
    <property type="component" value="Chromosome"/>
</dbReference>
<dbReference type="GO" id="GO:0005737">
    <property type="term" value="C:cytoplasm"/>
    <property type="evidence" value="ECO:0007669"/>
    <property type="project" value="UniProtKB-SubCell"/>
</dbReference>
<dbReference type="GO" id="GO:0000156">
    <property type="term" value="F:phosphorelay response regulator activity"/>
    <property type="evidence" value="ECO:0007669"/>
    <property type="project" value="InterPro"/>
</dbReference>
<dbReference type="GO" id="GO:0008984">
    <property type="term" value="F:protein-glutamate methylesterase activity"/>
    <property type="evidence" value="ECO:0007669"/>
    <property type="project" value="UniProtKB-UniRule"/>
</dbReference>
<dbReference type="GO" id="GO:0050568">
    <property type="term" value="F:protein-glutamine glutaminase activity"/>
    <property type="evidence" value="ECO:0007669"/>
    <property type="project" value="UniProtKB-UniRule"/>
</dbReference>
<dbReference type="GO" id="GO:0006935">
    <property type="term" value="P:chemotaxis"/>
    <property type="evidence" value="ECO:0007669"/>
    <property type="project" value="UniProtKB-UniRule"/>
</dbReference>
<dbReference type="CDD" id="cd16432">
    <property type="entry name" value="CheB_Rec"/>
    <property type="match status" value="1"/>
</dbReference>
<dbReference type="CDD" id="cd17541">
    <property type="entry name" value="REC_CheB-like"/>
    <property type="match status" value="1"/>
</dbReference>
<dbReference type="Gene3D" id="3.40.50.2300">
    <property type="match status" value="1"/>
</dbReference>
<dbReference type="Gene3D" id="3.40.50.180">
    <property type="entry name" value="Methylesterase CheB, C-terminal domain"/>
    <property type="match status" value="1"/>
</dbReference>
<dbReference type="HAMAP" id="MF_00099">
    <property type="entry name" value="CheB_chemtxs"/>
    <property type="match status" value="1"/>
</dbReference>
<dbReference type="InterPro" id="IPR008248">
    <property type="entry name" value="CheB-like"/>
</dbReference>
<dbReference type="InterPro" id="IPR035909">
    <property type="entry name" value="CheB_C"/>
</dbReference>
<dbReference type="InterPro" id="IPR011006">
    <property type="entry name" value="CheY-like_superfamily"/>
</dbReference>
<dbReference type="InterPro" id="IPR000673">
    <property type="entry name" value="Sig_transdc_resp-reg_Me-estase"/>
</dbReference>
<dbReference type="InterPro" id="IPR001789">
    <property type="entry name" value="Sig_transdc_resp-reg_receiver"/>
</dbReference>
<dbReference type="NCBIfam" id="NF001965">
    <property type="entry name" value="PRK00742.1"/>
    <property type="match status" value="1"/>
</dbReference>
<dbReference type="NCBIfam" id="NF009206">
    <property type="entry name" value="PRK12555.1"/>
    <property type="match status" value="1"/>
</dbReference>
<dbReference type="PANTHER" id="PTHR42872">
    <property type="entry name" value="PROTEIN-GLUTAMATE METHYLESTERASE/PROTEIN-GLUTAMINE GLUTAMINASE"/>
    <property type="match status" value="1"/>
</dbReference>
<dbReference type="PANTHER" id="PTHR42872:SF6">
    <property type="entry name" value="PROTEIN-GLUTAMATE METHYLESTERASE_PROTEIN-GLUTAMINE GLUTAMINASE"/>
    <property type="match status" value="1"/>
</dbReference>
<dbReference type="Pfam" id="PF01339">
    <property type="entry name" value="CheB_methylest"/>
    <property type="match status" value="1"/>
</dbReference>
<dbReference type="Pfam" id="PF00072">
    <property type="entry name" value="Response_reg"/>
    <property type="match status" value="1"/>
</dbReference>
<dbReference type="PIRSF" id="PIRSF000876">
    <property type="entry name" value="RR_chemtxs_CheB"/>
    <property type="match status" value="1"/>
</dbReference>
<dbReference type="SMART" id="SM00448">
    <property type="entry name" value="REC"/>
    <property type="match status" value="1"/>
</dbReference>
<dbReference type="SUPFAM" id="SSF52172">
    <property type="entry name" value="CheY-like"/>
    <property type="match status" value="1"/>
</dbReference>
<dbReference type="SUPFAM" id="SSF52738">
    <property type="entry name" value="Methylesterase CheB, C-terminal domain"/>
    <property type="match status" value="1"/>
</dbReference>
<dbReference type="PROSITE" id="PS50122">
    <property type="entry name" value="CHEB"/>
    <property type="match status" value="1"/>
</dbReference>
<dbReference type="PROSITE" id="PS50110">
    <property type="entry name" value="RESPONSE_REGULATORY"/>
    <property type="match status" value="1"/>
</dbReference>
<evidence type="ECO:0000255" key="1">
    <source>
        <dbReference type="HAMAP-Rule" id="MF_00099"/>
    </source>
</evidence>
<proteinExistence type="inferred from homology"/>
<organism>
    <name type="scientific">Geobacter metallireducens (strain ATCC 53774 / DSM 7210 / GS-15)</name>
    <dbReference type="NCBI Taxonomy" id="269799"/>
    <lineage>
        <taxon>Bacteria</taxon>
        <taxon>Pseudomonadati</taxon>
        <taxon>Thermodesulfobacteriota</taxon>
        <taxon>Desulfuromonadia</taxon>
        <taxon>Geobacterales</taxon>
        <taxon>Geobacteraceae</taxon>
        <taxon>Geobacter</taxon>
    </lineage>
</organism>
<accession>Q39S45</accession>
<comment type="function">
    <text evidence="1">Involved in chemotaxis. Part of a chemotaxis signal transduction system that modulates chemotaxis in response to various stimuli. Catalyzes the demethylation of specific methylglutamate residues introduced into the chemoreceptors (methyl-accepting chemotaxis proteins or MCP) by CheR. Also mediates the irreversible deamidation of specific glutamine residues to glutamic acid.</text>
</comment>
<comment type="catalytic activity">
    <reaction evidence="1">
        <text>[protein]-L-glutamate 5-O-methyl ester + H2O = L-glutamyl-[protein] + methanol + H(+)</text>
        <dbReference type="Rhea" id="RHEA:23236"/>
        <dbReference type="Rhea" id="RHEA-COMP:10208"/>
        <dbReference type="Rhea" id="RHEA-COMP:10311"/>
        <dbReference type="ChEBI" id="CHEBI:15377"/>
        <dbReference type="ChEBI" id="CHEBI:15378"/>
        <dbReference type="ChEBI" id="CHEBI:17790"/>
        <dbReference type="ChEBI" id="CHEBI:29973"/>
        <dbReference type="ChEBI" id="CHEBI:82795"/>
        <dbReference type="EC" id="3.1.1.61"/>
    </reaction>
</comment>
<comment type="catalytic activity">
    <reaction evidence="1">
        <text>L-glutaminyl-[protein] + H2O = L-glutamyl-[protein] + NH4(+)</text>
        <dbReference type="Rhea" id="RHEA:16441"/>
        <dbReference type="Rhea" id="RHEA-COMP:10207"/>
        <dbReference type="Rhea" id="RHEA-COMP:10208"/>
        <dbReference type="ChEBI" id="CHEBI:15377"/>
        <dbReference type="ChEBI" id="CHEBI:28938"/>
        <dbReference type="ChEBI" id="CHEBI:29973"/>
        <dbReference type="ChEBI" id="CHEBI:30011"/>
        <dbReference type="EC" id="3.5.1.44"/>
    </reaction>
</comment>
<comment type="subcellular location">
    <subcellularLocation>
        <location evidence="1">Cytoplasm</location>
    </subcellularLocation>
</comment>
<comment type="domain">
    <text evidence="1">Contains a C-terminal catalytic domain, and an N-terminal region which modulates catalytic activity.</text>
</comment>
<comment type="PTM">
    <text evidence="1">Phosphorylated by CheA. Phosphorylation of the N-terminal regulatory domain activates the methylesterase activity.</text>
</comment>
<comment type="similarity">
    <text evidence="1">Belongs to the CheB family.</text>
</comment>
<feature type="chain" id="PRO_0000264279" description="Protein-glutamate methylesterase/protein-glutamine glutaminase 4">
    <location>
        <begin position="1"/>
        <end position="347"/>
    </location>
</feature>
<feature type="domain" description="Response regulatory" evidence="1">
    <location>
        <begin position="3"/>
        <end position="121"/>
    </location>
</feature>
<feature type="domain" description="CheB-type methylesterase" evidence="1">
    <location>
        <begin position="157"/>
        <end position="342"/>
    </location>
</feature>
<feature type="active site" evidence="1">
    <location>
        <position position="168"/>
    </location>
</feature>
<feature type="active site" evidence="1">
    <location>
        <position position="195"/>
    </location>
</feature>
<feature type="active site" evidence="1">
    <location>
        <position position="289"/>
    </location>
</feature>
<feature type="modified residue" description="4-aspartylphosphate" evidence="1">
    <location>
        <position position="54"/>
    </location>
</feature>
<gene>
    <name evidence="1" type="primary">cheB4</name>
    <name type="ordered locus">Gmet_2711</name>
</gene>
<reference key="1">
    <citation type="journal article" date="2009" name="BMC Microbiol.">
        <title>The genome sequence of Geobacter metallireducens: features of metabolism, physiology and regulation common and dissimilar to Geobacter sulfurreducens.</title>
        <authorList>
            <person name="Aklujkar M."/>
            <person name="Krushkal J."/>
            <person name="DiBartolo G."/>
            <person name="Lapidus A."/>
            <person name="Land M.L."/>
            <person name="Lovley D.R."/>
        </authorList>
    </citation>
    <scope>NUCLEOTIDE SEQUENCE [LARGE SCALE GENOMIC DNA]</scope>
    <source>
        <strain>ATCC 53774 / DSM 7210 / GS-15</strain>
    </source>
</reference>
<keyword id="KW-0145">Chemotaxis</keyword>
<keyword id="KW-0963">Cytoplasm</keyword>
<keyword id="KW-0378">Hydrolase</keyword>
<keyword id="KW-0597">Phosphoprotein</keyword>
<keyword id="KW-1185">Reference proteome</keyword>
<protein>
    <recommendedName>
        <fullName evidence="1">Protein-glutamate methylesterase/protein-glutamine glutaminase 4</fullName>
        <ecNumber evidence="1">3.1.1.61</ecNumber>
        <ecNumber evidence="1">3.5.1.44</ecNumber>
    </recommendedName>
</protein>
<sequence>MVKVLIVDDSASVRLFLQGLLAADPGIEVIGTAADGDEAVEAVARLNPDVVTMDIYMPRMNGLLATRRIMETHPVPIVVVSGNLDAEEVASTFRAIEAGAVTALPRPQGPGHPNHEREARSFVQAVKLMAEVKVIKRWPRRDNPASLPSLPCQAMVPARLKAVAIGASTGGPMVLQTILAGLRRDFPLPVLIVQHMATGFIKGFVEWLNLTSALPVHIAGNGDRLIPGHAYVAPDCFHMLVTEDGTAIELQNTPPENGLRPSVSALFRSVTQAFGAQTVGVLLTGMGSDGARELKRLREAGAVTIVQDRESSVIHGMPGEALKLGAATHTLPPDRIVTALTSLAMEK</sequence>